<gene>
    <name type="primary">tet</name>
    <name type="synonym">tet(K)</name>
</gene>
<proteinExistence type="inferred from homology"/>
<reference key="1">
    <citation type="journal article" date="1983" name="Plasmid">
        <title>Complete nucleotide sequence of pT181, a tetracycline-resistance plasmid from Staphylococcus aureus.</title>
        <authorList>
            <person name="Khan S.A."/>
            <person name="Novick R.P."/>
        </authorList>
    </citation>
    <scope>NUCLEOTIDE SEQUENCE [GENOMIC DNA]</scope>
    <source>
        <plasmid>pT181</plasmid>
    </source>
</reference>
<reference key="2">
    <citation type="journal article" date="1988" name="J. Bacteriol.">
        <title>Characterization of the tetracycline resistance gene of plasmid pT181 of Staphylococcus aureus.</title>
        <authorList>
            <person name="Mojumdar M."/>
            <person name="Khan S.A."/>
        </authorList>
    </citation>
    <scope>SEQUENCE REVISION</scope>
    <source>
        <plasmid>pT181</plasmid>
    </source>
</reference>
<reference key="3">
    <citation type="journal article" date="1986" name="FEMS Microbiol. Lett.">
        <title>Determination of the complete nucleotide sequence of pNS1, a staphylococcal tetracycline-resistance plasmid propagated in Bacillus subtilis.</title>
        <authorList>
            <person name="Noguchi N."/>
            <person name="Aoki T."/>
            <person name="Sasatsu M."/>
            <person name="Kono M."/>
            <person name="Shishido K."/>
            <person name="Ando T."/>
        </authorList>
    </citation>
    <scope>NUCLEOTIDE SEQUENCE [GENOMIC DNA]</scope>
    <source>
        <plasmid>pTP5</plasmid>
    </source>
</reference>
<reference key="4">
    <citation type="journal article" date="1996" name="Sanop Misaengmul Hakhoe Chi">
        <title>Complete nucleotide sequence of pKH6, a tetracycline-resistance plasmid from multidrug-resistant Staphylococcus aureus SA2.</title>
        <authorList>
            <person name="Moon K.H."/>
            <person name="Lee D.W."/>
            <person name="Yoon S.J."/>
            <person name="Kim W.K."/>
            <person name="Shin C.K."/>
            <person name="Im S.H."/>
        </authorList>
    </citation>
    <scope>NUCLEOTIDE SEQUENCE [GENOMIC DNA]</scope>
    <source>
        <plasmid>pKH6</plasmid>
    </source>
</reference>
<reference key="5">
    <citation type="journal article" date="1993" name="Plasmid">
        <title>The tet(K) gene of plasmid pT181 of Staphylococcus aureus encodes an efflux protein that contains 14 transmembrane helices.</title>
        <authorList>
            <person name="Guay G.G."/>
            <person name="Khan S.A."/>
            <person name="Rothstein D.M."/>
        </authorList>
    </citation>
    <scope>NUCLEOTIDE SEQUENCE [GENOMIC DNA]</scope>
    <source>
        <plasmid>pT181</plasmid>
    </source>
</reference>
<reference key="6">
    <citation type="journal article" date="1996" name="Arch. Pharm. Res.">
        <title>Association of tet gene with partial sequence of IS431mec in tetracycline resistance plasmid pKH1.</title>
        <authorList>
            <person name="Moon K.H."/>
            <person name="Kim W.K."/>
            <person name="Yoon S.J."/>
            <person name="Kim J.M."/>
            <person name="Shin C.K."/>
            <person name="Im S.H."/>
        </authorList>
    </citation>
    <scope>NUCLEOTIDE SEQUENCE [GENOMIC DNA]</scope>
    <source>
        <plasmid>pKH1</plasmid>
    </source>
</reference>
<reference key="7">
    <citation type="journal article" date="1996" name="J. Microbiol. Biotechnol.">
        <title>Relationship between two tetracycline resistance plasmids of Staphylococcus aureus in Korea.</title>
        <authorList>
            <person name="Moon K.H."/>
            <person name="Kim W.K."/>
            <person name="Yoon S.J."/>
            <person name="Kim J.M."/>
            <person name="Shin C.K."/>
            <person name="Im S.H."/>
        </authorList>
    </citation>
    <scope>NUCLEOTIDE SEQUENCE [GENOMIC DNA]</scope>
    <source>
        <plasmid>pKH1</plasmid>
    </source>
</reference>
<keyword id="KW-0046">Antibiotic resistance</keyword>
<keyword id="KW-0050">Antiport</keyword>
<keyword id="KW-1003">Cell membrane</keyword>
<keyword id="KW-0375">Hydrogen ion transport</keyword>
<keyword id="KW-0406">Ion transport</keyword>
<keyword id="KW-0472">Membrane</keyword>
<keyword id="KW-0614">Plasmid</keyword>
<keyword id="KW-0812">Transmembrane</keyword>
<keyword id="KW-1133">Transmembrane helix</keyword>
<keyword id="KW-0813">Transport</keyword>
<protein>
    <recommendedName>
        <fullName>Tetracycline resistance protein</fullName>
    </recommendedName>
    <alternativeName>
        <fullName>Tetracycline efflux protein</fullName>
    </alternativeName>
</protein>
<feature type="chain" id="PRO_0000173384" description="Tetracycline resistance protein">
    <location>
        <begin position="1"/>
        <end position="459"/>
    </location>
</feature>
<feature type="transmembrane region" description="Helical" evidence="1">
    <location>
        <begin position="12"/>
        <end position="34"/>
    </location>
</feature>
<feature type="transmembrane region" description="Helical" evidence="1">
    <location>
        <begin position="49"/>
        <end position="68"/>
    </location>
</feature>
<feature type="transmembrane region" description="Helical" evidence="1">
    <location>
        <begin position="81"/>
        <end position="100"/>
    </location>
</feature>
<feature type="transmembrane region" description="Helical" evidence="1">
    <location>
        <begin position="105"/>
        <end position="127"/>
    </location>
</feature>
<feature type="transmembrane region" description="Helical" evidence="1">
    <location>
        <begin position="140"/>
        <end position="162"/>
    </location>
</feature>
<feature type="transmembrane region" description="Helical" evidence="1">
    <location>
        <begin position="166"/>
        <end position="188"/>
    </location>
</feature>
<feature type="transmembrane region" description="Helical" evidence="1">
    <location>
        <begin position="201"/>
        <end position="218"/>
    </location>
</feature>
<feature type="transmembrane region" description="Helical" evidence="1">
    <location>
        <begin position="223"/>
        <end position="240"/>
    </location>
</feature>
<feature type="transmembrane region" description="Helical" evidence="1">
    <location>
        <begin position="261"/>
        <end position="283"/>
    </location>
</feature>
<feature type="transmembrane region" description="Helical" evidence="1">
    <location>
        <begin position="293"/>
        <end position="315"/>
    </location>
</feature>
<feature type="transmembrane region" description="Helical" evidence="1">
    <location>
        <begin position="322"/>
        <end position="344"/>
    </location>
</feature>
<feature type="transmembrane region" description="Helical" evidence="1">
    <location>
        <begin position="348"/>
        <end position="370"/>
    </location>
</feature>
<feature type="transmembrane region" description="Helical" evidence="1">
    <location>
        <begin position="391"/>
        <end position="413"/>
    </location>
</feature>
<feature type="transmembrane region" description="Helical" evidence="1">
    <location>
        <begin position="428"/>
        <end position="450"/>
    </location>
</feature>
<feature type="sequence conflict" description="In Ref. 1; AAA26034." evidence="2" ref="1">
    <original>G</original>
    <variation>E</variation>
    <location>
        <position position="361"/>
    </location>
</feature>
<feature type="sequence conflict" description="In Ref. 1; AAA26034." evidence="2" ref="1">
    <original>I</original>
    <variation>N</variation>
    <location>
        <position position="438"/>
    </location>
</feature>
<feature type="sequence conflict" description="In Ref. 1; AAA26034." evidence="2" ref="1">
    <original>C</original>
    <variation>S</variation>
    <location>
        <position position="443"/>
    </location>
</feature>
<evidence type="ECO:0000255" key="1"/>
<evidence type="ECO:0000305" key="2"/>
<accession>P02983</accession>
<accession>P03863</accession>
<accession>P14512</accession>
<accession>Q79CG9</accession>
<comment type="function">
    <text>Resistance to tetracycline by an active tetracycline efflux. This is an energy-dependent process that decreases the accumulation of the antibiotic in whole cells. This protein functions as a metal-tetracycline/H(+) antiporter.</text>
</comment>
<comment type="subcellular location">
    <subcellularLocation>
        <location>Cell membrane</location>
        <topology>Multi-pass membrane protein</topology>
    </subcellularLocation>
</comment>
<comment type="similarity">
    <text evidence="2">Belongs to the major facilitator superfamily. TCR/Tet family.</text>
</comment>
<comment type="sequence caution" evidence="2">
    <conflict type="frameshift">
        <sequence resource="EMBL-CDS" id="AAA26034"/>
    </conflict>
</comment>
<comment type="sequence caution" evidence="2">
    <conflict type="erroneous initiation">
        <sequence resource="EMBL-CDS" id="AAA26035"/>
    </conflict>
</comment>
<geneLocation type="plasmid">
    <name>pT181</name>
</geneLocation>
<geneLocation type="plasmid">
    <name>pTP5</name>
</geneLocation>
<geneLocation type="plasmid">
    <name>pKH6</name>
</geneLocation>
<geneLocation type="plasmid">
    <name>pKH1</name>
</geneLocation>
<organism>
    <name type="scientific">Staphylococcus aureus</name>
    <dbReference type="NCBI Taxonomy" id="1280"/>
    <lineage>
        <taxon>Bacteria</taxon>
        <taxon>Bacillati</taxon>
        <taxon>Bacillota</taxon>
        <taxon>Bacilli</taxon>
        <taxon>Bacillales</taxon>
        <taxon>Staphylococcaceae</taxon>
        <taxon>Staphylococcus</taxon>
    </lineage>
</organism>
<name>TCR_STAAU</name>
<sequence>MFSLYKKFKGLFYSVLFWLCILSFFSVLNEMVLNVSLPDIANHFNTTPGITNWVNTAYMLTFSIGTAVYGKLSDYINIKKLLIIGISLSCLGSLIAFIGHNHFFILIFGRLVQGVGSAAFPSLIMVVVARNITRKKQGKAFGFIGSIVALGEGLGPSIGGIIAHYIHWSYLLILPMITIVTIPFLIKVMVPGKSTKNTLDIVGIVLMSISIICFMLFTTNYNWTFLILFTIFFVIFIKHISRVSNPFINPKLGKNIPFMLGLFSGGLIFSIVAGFISMVPYMMKTIYHVNVATIGNSVIFPGTMSVIVFGYFGGFLVDRKGSLFVFILGSLSISISFLTIAFFVEFSMWLTTFMFIFVMGGLSFTKTVISKIVSSSLSEEEVASGMSLLNFTSFLSEGTGIAIVGGLLSLQLINRKLVLEFINYSSGVYSNILVAMAILIILCCLLTIIVFKRSEKQFE</sequence>
<dbReference type="EMBL" id="J01764">
    <property type="protein sequence ID" value="AAA26034.1"/>
    <property type="status" value="ALT_SEQ"/>
    <property type="molecule type" value="Genomic_DNA"/>
</dbReference>
<dbReference type="EMBL" id="J01764">
    <property type="protein sequence ID" value="AAA26035.1"/>
    <property type="status" value="ALT_INIT"/>
    <property type="molecule type" value="Genomic_DNA"/>
</dbReference>
<dbReference type="EMBL" id="M23644">
    <property type="protein sequence ID" value="AAA98301.1"/>
    <property type="molecule type" value="Genomic_DNA"/>
</dbReference>
<dbReference type="EMBL" id="M16217">
    <property type="protein sequence ID" value="AAA19179.1"/>
    <property type="molecule type" value="Unassigned_DNA"/>
</dbReference>
<dbReference type="EMBL" id="U38428">
    <property type="protein sequence ID" value="AAB07712.1"/>
    <property type="molecule type" value="Genomic_DNA"/>
</dbReference>
<dbReference type="EMBL" id="S67449">
    <property type="protein sequence ID" value="AAB28795.1"/>
    <property type="molecule type" value="Genomic_DNA"/>
</dbReference>
<dbReference type="EMBL" id="U38656">
    <property type="protein sequence ID" value="AAB09660.1"/>
    <property type="molecule type" value="Genomic_DNA"/>
</dbReference>
<dbReference type="PIR" id="A04492">
    <property type="entry name" value="QQSACT"/>
</dbReference>
<dbReference type="PIR" id="S42238">
    <property type="entry name" value="S42238"/>
</dbReference>
<dbReference type="RefSeq" id="NP_040465.1">
    <property type="nucleotide sequence ID" value="NC_001391.1"/>
</dbReference>
<dbReference type="RefSeq" id="NP_040470.1">
    <property type="nucleotide sequence ID" value="NC_001393.1"/>
</dbReference>
<dbReference type="RefSeq" id="NP_040471.1">
    <property type="nucleotide sequence ID" value="NC_001393.1"/>
</dbReference>
<dbReference type="RefSeq" id="NP_044360.1">
    <property type="nucleotide sequence ID" value="NC_001763.1"/>
</dbReference>
<dbReference type="RefSeq" id="NP_053795.1">
    <property type="nucleotide sequence ID" value="NC_001767.1"/>
</dbReference>
<dbReference type="RefSeq" id="WP_000492283.1">
    <property type="nucleotide sequence ID" value="NZ_WTUM01000069.1"/>
</dbReference>
<dbReference type="RefSeq" id="YP_001649337.1">
    <property type="nucleotide sequence ID" value="NC_010262.1"/>
</dbReference>
<dbReference type="RefSeq" id="YP_006937482.1">
    <property type="nucleotide sequence ID" value="NC_013307.1"/>
</dbReference>
<dbReference type="RefSeq" id="YP_006937490.1">
    <property type="nucleotide sequence ID" value="NC_013309.1"/>
</dbReference>
<dbReference type="RefSeq" id="YP_006937494.1">
    <property type="nucleotide sequence ID" value="NC_013311.1"/>
</dbReference>
<dbReference type="RefSeq" id="YP_006937498.1">
    <property type="nucleotide sequence ID" value="NC_013312.1"/>
</dbReference>
<dbReference type="RefSeq" id="YP_006937647.1">
    <property type="nucleotide sequence ID" value="NC_013320.1"/>
</dbReference>
<dbReference type="RefSeq" id="YP_006937988.1">
    <property type="nucleotide sequence ID" value="NC_013328.1"/>
</dbReference>
<dbReference type="RefSeq" id="YP_006938259.1">
    <property type="nucleotide sequence ID" value="NC_013336.1"/>
</dbReference>
<dbReference type="SMR" id="P02983"/>
<dbReference type="TCDB" id="2.A.1.3.6">
    <property type="family name" value="the major facilitator superfamily (mfs)"/>
</dbReference>
<dbReference type="GeneID" id="97229384"/>
<dbReference type="OMA" id="ESRAMNH"/>
<dbReference type="GO" id="GO:0005886">
    <property type="term" value="C:plasma membrane"/>
    <property type="evidence" value="ECO:0007669"/>
    <property type="project" value="UniProtKB-SubCell"/>
</dbReference>
<dbReference type="GO" id="GO:0015297">
    <property type="term" value="F:antiporter activity"/>
    <property type="evidence" value="ECO:0007669"/>
    <property type="project" value="UniProtKB-KW"/>
</dbReference>
<dbReference type="GO" id="GO:1902600">
    <property type="term" value="P:proton transmembrane transport"/>
    <property type="evidence" value="ECO:0007669"/>
    <property type="project" value="UniProtKB-KW"/>
</dbReference>
<dbReference type="GO" id="GO:0046677">
    <property type="term" value="P:response to antibiotic"/>
    <property type="evidence" value="ECO:0007669"/>
    <property type="project" value="UniProtKB-KW"/>
</dbReference>
<dbReference type="CDD" id="cd17321">
    <property type="entry name" value="MFS_MMR_MDR_like"/>
    <property type="match status" value="1"/>
</dbReference>
<dbReference type="Gene3D" id="1.20.1250.20">
    <property type="entry name" value="MFS general substrate transporter like domains"/>
    <property type="match status" value="1"/>
</dbReference>
<dbReference type="Gene3D" id="1.20.1720.10">
    <property type="entry name" value="Multidrug resistance protein D"/>
    <property type="match status" value="1"/>
</dbReference>
<dbReference type="InterPro" id="IPR011701">
    <property type="entry name" value="MFS"/>
</dbReference>
<dbReference type="InterPro" id="IPR020846">
    <property type="entry name" value="MFS_dom"/>
</dbReference>
<dbReference type="InterPro" id="IPR036259">
    <property type="entry name" value="MFS_trans_sf"/>
</dbReference>
<dbReference type="NCBIfam" id="NF012183">
    <property type="entry name" value="tet_MFS_K"/>
    <property type="match status" value="1"/>
</dbReference>
<dbReference type="NCBIfam" id="NF012175">
    <property type="entry name" value="tet_MFS_L_K_45"/>
    <property type="match status" value="1"/>
</dbReference>
<dbReference type="PANTHER" id="PTHR23501">
    <property type="entry name" value="MAJOR FACILITATOR SUPERFAMILY"/>
    <property type="match status" value="1"/>
</dbReference>
<dbReference type="PANTHER" id="PTHR23501:SF188">
    <property type="entry name" value="TETRACYCLINE RESISTANCE PROTEIN"/>
    <property type="match status" value="1"/>
</dbReference>
<dbReference type="Pfam" id="PF07690">
    <property type="entry name" value="MFS_1"/>
    <property type="match status" value="1"/>
</dbReference>
<dbReference type="PRINTS" id="PR01036">
    <property type="entry name" value="TCRTETB"/>
</dbReference>
<dbReference type="SUPFAM" id="SSF103473">
    <property type="entry name" value="MFS general substrate transporter"/>
    <property type="match status" value="1"/>
</dbReference>
<dbReference type="PROSITE" id="PS50850">
    <property type="entry name" value="MFS"/>
    <property type="match status" value="1"/>
</dbReference>